<evidence type="ECO:0000250" key="1"/>
<evidence type="ECO:0000255" key="2">
    <source>
        <dbReference type="PROSITE-ProRule" id="PRU00176"/>
    </source>
</evidence>
<evidence type="ECO:0000256" key="3">
    <source>
        <dbReference type="SAM" id="MobiDB-lite"/>
    </source>
</evidence>
<dbReference type="EMBL" id="CR858718">
    <property type="protein sequence ID" value="CAH90927.1"/>
    <property type="molecule type" value="mRNA"/>
</dbReference>
<dbReference type="RefSeq" id="NP_001129003.1">
    <property type="nucleotide sequence ID" value="NM_001135531.1"/>
</dbReference>
<dbReference type="RefSeq" id="XP_063577727.1">
    <property type="nucleotide sequence ID" value="XM_063721657.1"/>
</dbReference>
<dbReference type="SMR" id="Q5RBD3"/>
<dbReference type="FunCoup" id="Q5RBD3">
    <property type="interactions" value="1687"/>
</dbReference>
<dbReference type="STRING" id="9601.ENSPPYP00000015720"/>
<dbReference type="Ensembl" id="ENSPPYT00000035834.1">
    <property type="protein sequence ID" value="ENSPPYP00000043385.1"/>
    <property type="gene ID" value="ENSPPYG00000014050.2"/>
</dbReference>
<dbReference type="GeneID" id="100190843"/>
<dbReference type="KEGG" id="pon:100190843"/>
<dbReference type="CTD" id="27303"/>
<dbReference type="GeneTree" id="ENSGT00940000157131"/>
<dbReference type="InParanoid" id="Q5RBD3"/>
<dbReference type="OrthoDB" id="271725at2759"/>
<dbReference type="Proteomes" id="UP000001595">
    <property type="component" value="Chromosome 3"/>
</dbReference>
<dbReference type="GO" id="GO:0005737">
    <property type="term" value="C:cytoplasm"/>
    <property type="evidence" value="ECO:0007669"/>
    <property type="project" value="UniProtKB-SubCell"/>
</dbReference>
<dbReference type="GO" id="GO:1990904">
    <property type="term" value="C:ribonucleoprotein complex"/>
    <property type="evidence" value="ECO:0007669"/>
    <property type="project" value="InterPro"/>
</dbReference>
<dbReference type="GO" id="GO:0003723">
    <property type="term" value="F:RNA binding"/>
    <property type="evidence" value="ECO:0007669"/>
    <property type="project" value="UniProtKB-KW"/>
</dbReference>
<dbReference type="CDD" id="cd12472">
    <property type="entry name" value="RRM1_RBMS3"/>
    <property type="match status" value="1"/>
</dbReference>
<dbReference type="CDD" id="cd12475">
    <property type="entry name" value="RRM2_RBMS3"/>
    <property type="match status" value="1"/>
</dbReference>
<dbReference type="FunFam" id="3.30.70.330:FF:000012">
    <property type="entry name" value="RNA-binding motif, single-stranded-interacting protein 3 isoform 1"/>
    <property type="match status" value="1"/>
</dbReference>
<dbReference type="FunFam" id="3.30.70.330:FF:000014">
    <property type="entry name" value="RNA-binding motif, single-stranded-interacting protein 3 isoform 1"/>
    <property type="match status" value="1"/>
</dbReference>
<dbReference type="Gene3D" id="3.30.70.330">
    <property type="match status" value="2"/>
</dbReference>
<dbReference type="InterPro" id="IPR002343">
    <property type="entry name" value="Hud_Sxl_RNA"/>
</dbReference>
<dbReference type="InterPro" id="IPR012677">
    <property type="entry name" value="Nucleotide-bd_a/b_plait_sf"/>
</dbReference>
<dbReference type="InterPro" id="IPR035979">
    <property type="entry name" value="RBD_domain_sf"/>
</dbReference>
<dbReference type="InterPro" id="IPR034406">
    <property type="entry name" value="RBMS3_RRM2"/>
</dbReference>
<dbReference type="InterPro" id="IPR000504">
    <property type="entry name" value="RRM_dom"/>
</dbReference>
<dbReference type="PANTHER" id="PTHR24012">
    <property type="entry name" value="RNA BINDING PROTEIN"/>
    <property type="match status" value="1"/>
</dbReference>
<dbReference type="Pfam" id="PF00076">
    <property type="entry name" value="RRM_1"/>
    <property type="match status" value="2"/>
</dbReference>
<dbReference type="PRINTS" id="PR00961">
    <property type="entry name" value="HUDSXLRNA"/>
</dbReference>
<dbReference type="SMART" id="SM00360">
    <property type="entry name" value="RRM"/>
    <property type="match status" value="2"/>
</dbReference>
<dbReference type="SUPFAM" id="SSF54928">
    <property type="entry name" value="RNA-binding domain, RBD"/>
    <property type="match status" value="2"/>
</dbReference>
<dbReference type="PROSITE" id="PS50102">
    <property type="entry name" value="RRM"/>
    <property type="match status" value="2"/>
</dbReference>
<organism>
    <name type="scientific">Pongo abelii</name>
    <name type="common">Sumatran orangutan</name>
    <name type="synonym">Pongo pygmaeus abelii</name>
    <dbReference type="NCBI Taxonomy" id="9601"/>
    <lineage>
        <taxon>Eukaryota</taxon>
        <taxon>Metazoa</taxon>
        <taxon>Chordata</taxon>
        <taxon>Craniata</taxon>
        <taxon>Vertebrata</taxon>
        <taxon>Euteleostomi</taxon>
        <taxon>Mammalia</taxon>
        <taxon>Eutheria</taxon>
        <taxon>Euarchontoglires</taxon>
        <taxon>Primates</taxon>
        <taxon>Haplorrhini</taxon>
        <taxon>Catarrhini</taxon>
        <taxon>Hominidae</taxon>
        <taxon>Pongo</taxon>
    </lineage>
</organism>
<feature type="chain" id="PRO_0000274908" description="RNA-binding motif, single-stranded-interacting protein 3">
    <location>
        <begin position="1"/>
        <end position="436"/>
    </location>
</feature>
<feature type="domain" description="RRM 1" evidence="2">
    <location>
        <begin position="60"/>
        <end position="133"/>
    </location>
</feature>
<feature type="domain" description="RRM 2" evidence="2">
    <location>
        <begin position="139"/>
        <end position="224"/>
    </location>
</feature>
<feature type="region of interest" description="Disordered" evidence="3">
    <location>
        <begin position="28"/>
        <end position="56"/>
    </location>
</feature>
<feature type="region of interest" description="Disordered" evidence="3">
    <location>
        <begin position="398"/>
        <end position="436"/>
    </location>
</feature>
<feature type="compositionally biased region" description="Pro residues" evidence="3">
    <location>
        <begin position="30"/>
        <end position="39"/>
    </location>
</feature>
<feature type="compositionally biased region" description="Low complexity" evidence="3">
    <location>
        <begin position="40"/>
        <end position="53"/>
    </location>
</feature>
<feature type="compositionally biased region" description="Polar residues" evidence="3">
    <location>
        <begin position="398"/>
        <end position="421"/>
    </location>
</feature>
<gene>
    <name type="primary">RBMS3</name>
</gene>
<keyword id="KW-0963">Cytoplasm</keyword>
<keyword id="KW-1185">Reference proteome</keyword>
<keyword id="KW-0677">Repeat</keyword>
<keyword id="KW-0694">RNA-binding</keyword>
<comment type="function">
    <text evidence="1">Binds poly(A) and poly(U) oligoribonucleotides.</text>
</comment>
<comment type="subcellular location">
    <subcellularLocation>
        <location evidence="1">Cytoplasm</location>
    </subcellularLocation>
</comment>
<reference key="1">
    <citation type="submission" date="2005-04" db="EMBL/GenBank/DDBJ databases">
        <authorList>
            <consortium name="The German cDNA consortium"/>
        </authorList>
    </citation>
    <scope>NUCLEOTIDE SEQUENCE [LARGE SCALE MRNA]</scope>
    <source>
        <tissue>Heart</tissue>
    </source>
</reference>
<protein>
    <recommendedName>
        <fullName>RNA-binding motif, single-stranded-interacting protein 3</fullName>
    </recommendedName>
</protein>
<accession>Q5RBD3</accession>
<proteinExistence type="evidence at transcript level"/>
<name>RBMS3_PONAB</name>
<sequence length="436" mass="47712">MGKRLDQPQMYPQYTYYYPHYLQTKSYAPAPHPMAPPSPSTNSSSNNSSNNSSGEQLSKTNLYIRGLPPGTTDQDLIKLCQPYGKIVSTKAILDKNTNQCKGYGFVDFDSPAAAQKAVASLKANGVQAQMAKQQEQDPTNLYISNLPISMDEQELENMLKPFGHVISTRILRDANGVSRGVGFARMESTEKCEVVIQHFNGKYLKTPPGIPAPSEPLLCKFADGGQKKRQNQSKYTQNGRPWPREGEAGMALTYDPTAAIQNGFYSSPYSIATNRMIPQTSITPFIAASPVSTYQVQSTSWMPHPPYVMQPTGAVITPTMDHPMSMQPANMMGPLTQQMNHLSLGTTGTIQSQDRIMILHQLLCQYMTAAAPMQGTYIPQYTPVPPTAVSIEGVVADTSPQTVAPSSQDTSGQQQQIAVDTSNEHAPAYSYQQSKP</sequence>